<comment type="function">
    <text evidence="3">Metallo-phosphoesterase involved in phosphate metabolism. Acid phosphatase activity with phosphoenolpyruvate, inorganic pyrophosphate, phenyl-phosphate and p-nitrophenyl-phosphate as the most effective substrates. No activity with phytic acid, phosphocholine or bis-p-nitrophenyl-phosphate. Has a peroxidase activity at alkaline pH.</text>
</comment>
<comment type="catalytic activity">
    <reaction>
        <text>a phosphate monoester + H2O = an alcohol + phosphate</text>
        <dbReference type="Rhea" id="RHEA:15017"/>
        <dbReference type="ChEBI" id="CHEBI:15377"/>
        <dbReference type="ChEBI" id="CHEBI:30879"/>
        <dbReference type="ChEBI" id="CHEBI:43474"/>
        <dbReference type="ChEBI" id="CHEBI:67140"/>
        <dbReference type="EC" id="3.1.3.2"/>
    </reaction>
</comment>
<comment type="catalytic activity">
    <reaction>
        <text>2 a phenolic donor + H2O2 = 2 a phenolic radical donor + 2 H2O</text>
        <dbReference type="Rhea" id="RHEA:56136"/>
        <dbReference type="ChEBI" id="CHEBI:15377"/>
        <dbReference type="ChEBI" id="CHEBI:16240"/>
        <dbReference type="ChEBI" id="CHEBI:139520"/>
        <dbReference type="ChEBI" id="CHEBI:139521"/>
        <dbReference type="EC" id="1.11.1.7"/>
    </reaction>
</comment>
<comment type="cofactor">
    <cofactor evidence="1">
        <name>Fe cation</name>
        <dbReference type="ChEBI" id="CHEBI:24875"/>
    </cofactor>
    <text evidence="1">Binds 1 Fe cation per subunit.</text>
</comment>
<comment type="cofactor">
    <cofactor evidence="1">
        <name>Zn(2+)</name>
        <dbReference type="ChEBI" id="CHEBI:29105"/>
    </cofactor>
    <text evidence="1">Binds 1 zinc ion per subunit.</text>
</comment>
<comment type="activity regulation">
    <text>Activated by Mg(2+), Co(2+), Mn(2+) and Ba(2+). Inhibited by Fe(2+), Cu(2+), Zn(2+), NaF, molybdate, arsenate, vanadate and inorganic phosphate. No effect of tartrate, Asp, Gln, glutathione, Asn, ascorbic acid and phosphite.</text>
</comment>
<comment type="biophysicochemical properties">
    <absorption>
        <max evidence="3">520 nm</max>
    </absorption>
    <kinetics>
        <KM evidence="3">0.8 mM for phosphoenolpyruvate (for the phosphatase activity)</KM>
    </kinetics>
    <phDependence>
        <text evidence="3">Optimum pH is 5.6 for the phosphatase activity and 8.8 for the peroxidase activity.</text>
    </phDependence>
</comment>
<comment type="subunit">
    <text>Homodimer.</text>
</comment>
<comment type="subcellular location">
    <subcellularLocation>
        <location evidence="3">Vacuole</location>
    </subcellularLocation>
</comment>
<comment type="tissue specificity">
    <text evidence="2">Expressed in roots, stems, leaves, flowers and siliques.</text>
</comment>
<comment type="induction">
    <text evidence="3">Not induced at the transcription level by phosphate starvation, but accumulation of the protein in starved shoots.</text>
</comment>
<comment type="PTM">
    <text evidence="3">Glycosylated.</text>
</comment>
<comment type="similarity">
    <text evidence="4">Belongs to the metallophosphoesterase superfamily. Purple acid phosphatase family.</text>
</comment>
<dbReference type="EC" id="3.1.3.2"/>
<dbReference type="EC" id="1.11.1.7"/>
<dbReference type="EMBL" id="AY842026">
    <property type="protein sequence ID" value="AAW29950.1"/>
    <property type="molecule type" value="mRNA"/>
</dbReference>
<dbReference type="EMBL" id="AC019013">
    <property type="status" value="NOT_ANNOTATED_CDS"/>
    <property type="molecule type" value="Genomic_DNA"/>
</dbReference>
<dbReference type="EMBL" id="CP002688">
    <property type="protein sequence ID" value="AED93912.1"/>
    <property type="molecule type" value="Genomic_DNA"/>
</dbReference>
<dbReference type="EMBL" id="AY050812">
    <property type="protein sequence ID" value="AAK92747.1"/>
    <property type="molecule type" value="mRNA"/>
</dbReference>
<dbReference type="EMBL" id="AY091415">
    <property type="protein sequence ID" value="AAM14354.1"/>
    <property type="molecule type" value="mRNA"/>
</dbReference>
<dbReference type="RefSeq" id="NP_198334.1">
    <property type="nucleotide sequence ID" value="NM_122874.4"/>
</dbReference>
<dbReference type="SMR" id="Q949Y3"/>
<dbReference type="FunCoup" id="Q949Y3">
    <property type="interactions" value="1915"/>
</dbReference>
<dbReference type="STRING" id="3702.Q949Y3"/>
<dbReference type="GlyCosmos" id="Q949Y3">
    <property type="glycosylation" value="3 sites, No reported glycans"/>
</dbReference>
<dbReference type="GlyGen" id="Q949Y3">
    <property type="glycosylation" value="4 sites"/>
</dbReference>
<dbReference type="iPTMnet" id="Q949Y3"/>
<dbReference type="PaxDb" id="3702-AT5G34850.1"/>
<dbReference type="ProteomicsDB" id="249027"/>
<dbReference type="EnsemblPlants" id="AT5G34850.1">
    <property type="protein sequence ID" value="AT5G34850.1"/>
    <property type="gene ID" value="AT5G34850"/>
</dbReference>
<dbReference type="GeneID" id="833406"/>
<dbReference type="Gramene" id="AT5G34850.1">
    <property type="protein sequence ID" value="AT5G34850.1"/>
    <property type="gene ID" value="AT5G34850"/>
</dbReference>
<dbReference type="KEGG" id="ath:AT5G34850"/>
<dbReference type="Araport" id="AT5G34850"/>
<dbReference type="TAIR" id="AT5G34850">
    <property type="gene designation" value="PAP26"/>
</dbReference>
<dbReference type="eggNOG" id="KOG1378">
    <property type="taxonomic scope" value="Eukaryota"/>
</dbReference>
<dbReference type="HOGENOM" id="CLU_013387_0_1_1"/>
<dbReference type="InParanoid" id="Q949Y3"/>
<dbReference type="OMA" id="SSMWITW"/>
<dbReference type="PhylomeDB" id="Q949Y3"/>
<dbReference type="BRENDA" id="3.1.3.2">
    <property type="organism ID" value="399"/>
</dbReference>
<dbReference type="PRO" id="PR:Q949Y3"/>
<dbReference type="Proteomes" id="UP000006548">
    <property type="component" value="Chromosome 5"/>
</dbReference>
<dbReference type="ExpressionAtlas" id="Q949Y3">
    <property type="expression patterns" value="baseline and differential"/>
</dbReference>
<dbReference type="GO" id="GO:0000325">
    <property type="term" value="C:plant-type vacuole"/>
    <property type="evidence" value="ECO:0007005"/>
    <property type="project" value="TAIR"/>
</dbReference>
<dbReference type="GO" id="GO:0009536">
    <property type="term" value="C:plastid"/>
    <property type="evidence" value="ECO:0007005"/>
    <property type="project" value="TAIR"/>
</dbReference>
<dbReference type="GO" id="GO:0099503">
    <property type="term" value="C:secretory vesicle"/>
    <property type="evidence" value="ECO:0007005"/>
    <property type="project" value="TAIR"/>
</dbReference>
<dbReference type="GO" id="GO:0005773">
    <property type="term" value="C:vacuole"/>
    <property type="evidence" value="ECO:0000314"/>
    <property type="project" value="TAIR"/>
</dbReference>
<dbReference type="GO" id="GO:0003993">
    <property type="term" value="F:acid phosphatase activity"/>
    <property type="evidence" value="ECO:0000315"/>
    <property type="project" value="TAIR"/>
</dbReference>
<dbReference type="GO" id="GO:0140825">
    <property type="term" value="F:lactoperoxidase activity"/>
    <property type="evidence" value="ECO:0007669"/>
    <property type="project" value="UniProtKB-EC"/>
</dbReference>
<dbReference type="GO" id="GO:0046872">
    <property type="term" value="F:metal ion binding"/>
    <property type="evidence" value="ECO:0007669"/>
    <property type="project" value="UniProtKB-KW"/>
</dbReference>
<dbReference type="GO" id="GO:0042744">
    <property type="term" value="P:hydrogen peroxide catabolic process"/>
    <property type="evidence" value="ECO:0007669"/>
    <property type="project" value="UniProtKB-KW"/>
</dbReference>
<dbReference type="GO" id="GO:0055062">
    <property type="term" value="P:phosphate ion homeostasis"/>
    <property type="evidence" value="ECO:0000315"/>
    <property type="project" value="TAIR"/>
</dbReference>
<dbReference type="GO" id="GO:0051174">
    <property type="term" value="P:regulation of phosphorus metabolic process"/>
    <property type="evidence" value="ECO:0000315"/>
    <property type="project" value="TAIR"/>
</dbReference>
<dbReference type="CDD" id="cd00839">
    <property type="entry name" value="MPP_PAPs"/>
    <property type="match status" value="1"/>
</dbReference>
<dbReference type="FunFam" id="2.60.40.380:FF:000001">
    <property type="entry name" value="Fe(3+)-Zn(2+) purple acid phosphatase"/>
    <property type="match status" value="1"/>
</dbReference>
<dbReference type="FunFam" id="3.60.21.10:FF:000034">
    <property type="entry name" value="Fe(3+)-Zn(2+) purple acid phosphatase"/>
    <property type="match status" value="1"/>
</dbReference>
<dbReference type="Gene3D" id="3.60.21.10">
    <property type="match status" value="1"/>
</dbReference>
<dbReference type="Gene3D" id="2.60.40.380">
    <property type="entry name" value="Purple acid phosphatase-like, N-terminal"/>
    <property type="match status" value="1"/>
</dbReference>
<dbReference type="InterPro" id="IPR004843">
    <property type="entry name" value="Calcineurin-like_PHP_ApaH"/>
</dbReference>
<dbReference type="InterPro" id="IPR029052">
    <property type="entry name" value="Metallo-depent_PP-like"/>
</dbReference>
<dbReference type="InterPro" id="IPR041792">
    <property type="entry name" value="MPP_PAP"/>
</dbReference>
<dbReference type="InterPro" id="IPR039331">
    <property type="entry name" value="PPA-like"/>
</dbReference>
<dbReference type="InterPro" id="IPR008963">
    <property type="entry name" value="Purple_acid_Pase-like_N"/>
</dbReference>
<dbReference type="InterPro" id="IPR015914">
    <property type="entry name" value="Purple_acid_Pase_N"/>
</dbReference>
<dbReference type="InterPro" id="IPR025733">
    <property type="entry name" value="Purple_acid_PPase_C_dom"/>
</dbReference>
<dbReference type="PANTHER" id="PTHR22953">
    <property type="entry name" value="ACID PHOSPHATASE RELATED"/>
    <property type="match status" value="1"/>
</dbReference>
<dbReference type="PANTHER" id="PTHR22953:SF55">
    <property type="entry name" value="BIFUNCTIONAL PURPLE ACID PHOSPHATASE 26"/>
    <property type="match status" value="1"/>
</dbReference>
<dbReference type="Pfam" id="PF00149">
    <property type="entry name" value="Metallophos"/>
    <property type="match status" value="1"/>
</dbReference>
<dbReference type="Pfam" id="PF14008">
    <property type="entry name" value="Metallophos_C"/>
    <property type="match status" value="1"/>
</dbReference>
<dbReference type="Pfam" id="PF16656">
    <property type="entry name" value="Pur_ac_phosph_N"/>
    <property type="match status" value="1"/>
</dbReference>
<dbReference type="SUPFAM" id="SSF56300">
    <property type="entry name" value="Metallo-dependent phosphatases"/>
    <property type="match status" value="1"/>
</dbReference>
<dbReference type="SUPFAM" id="SSF49363">
    <property type="entry name" value="Purple acid phosphatase, N-terminal domain"/>
    <property type="match status" value="1"/>
</dbReference>
<organism>
    <name type="scientific">Arabidopsis thaliana</name>
    <name type="common">Mouse-ear cress</name>
    <dbReference type="NCBI Taxonomy" id="3702"/>
    <lineage>
        <taxon>Eukaryota</taxon>
        <taxon>Viridiplantae</taxon>
        <taxon>Streptophyta</taxon>
        <taxon>Embryophyta</taxon>
        <taxon>Tracheophyta</taxon>
        <taxon>Spermatophyta</taxon>
        <taxon>Magnoliopsida</taxon>
        <taxon>eudicotyledons</taxon>
        <taxon>Gunneridae</taxon>
        <taxon>Pentapetalae</taxon>
        <taxon>rosids</taxon>
        <taxon>malvids</taxon>
        <taxon>Brassicales</taxon>
        <taxon>Brassicaceae</taxon>
        <taxon>Camelineae</taxon>
        <taxon>Arabidopsis</taxon>
    </lineage>
</organism>
<sequence>MNHLVIISVFLSSVLLLYRGESGITSSFIRSEWPAVDIPLDHHVFKVPKGYNAPQQVHITQGDYDGKAVIISWVTPDEPGSSQVHYGAVQGKYEFVAQGTYHNYTFYKYKSGFIHHCLVSDLEHDTKYYYKIESGESSREFWFVTPPHVHPDASYKFGIIGDMGQTFNSLSTLEHYMESGAQAVLFLGDLSYADRYQYNDVGVRWDSWGRFVERSTAYQPWLWSAGNHEVDYMPYMGEVTPFRNYLQRYTTPYLASKSSSPLWYAVRRASAHIIVLSSYSPFVKYTPQWHWLSEELTRVDREKTPWLIVLMHVPIYNSNEAHFMEGESMRAAFEEWFVQHKVDVIFAGHVHAYERSYRISNVRYNVSSGDRYPVPDKSAPVYITVGDGGNQEGLAGRFTEPQPDYSAFREASYGHSTLDIKNRTHAIYHWNRNDDGKKVATDEFVLHNQYWGKNIRRRKLKKHYIRSVVGGWIAT</sequence>
<feature type="signal peptide" evidence="3">
    <location>
        <begin position="1"/>
        <end position="30"/>
    </location>
</feature>
<feature type="chain" id="PRO_0000333285" description="Bifunctional purple acid phosphatase 26">
    <location>
        <begin position="31"/>
        <end position="475"/>
    </location>
</feature>
<feature type="active site" description="Proton donor" evidence="1">
    <location>
        <position position="322"/>
    </location>
</feature>
<feature type="binding site" evidence="1">
    <location>
        <position position="162"/>
    </location>
    <ligand>
        <name>Fe cation</name>
        <dbReference type="ChEBI" id="CHEBI:24875"/>
    </ligand>
</feature>
<feature type="binding site" evidence="1">
    <location>
        <position position="189"/>
    </location>
    <ligand>
        <name>Fe cation</name>
        <dbReference type="ChEBI" id="CHEBI:24875"/>
    </ligand>
</feature>
<feature type="binding site" evidence="1">
    <location>
        <position position="189"/>
    </location>
    <ligand>
        <name>Zn(2+)</name>
        <dbReference type="ChEBI" id="CHEBI:29105"/>
    </ligand>
</feature>
<feature type="binding site" evidence="1">
    <location>
        <position position="192"/>
    </location>
    <ligand>
        <name>Fe cation</name>
        <dbReference type="ChEBI" id="CHEBI:24875"/>
    </ligand>
</feature>
<feature type="binding site" evidence="1">
    <location>
        <position position="227"/>
    </location>
    <ligand>
        <name>substrate</name>
    </ligand>
</feature>
<feature type="binding site" evidence="1">
    <location>
        <position position="227"/>
    </location>
    <ligand>
        <name>Zn(2+)</name>
        <dbReference type="ChEBI" id="CHEBI:29105"/>
    </ligand>
</feature>
<feature type="binding site" evidence="1">
    <location>
        <position position="312"/>
    </location>
    <ligand>
        <name>Zn(2+)</name>
        <dbReference type="ChEBI" id="CHEBI:29105"/>
    </ligand>
</feature>
<feature type="binding site" evidence="1">
    <location>
        <begin position="349"/>
        <end position="351"/>
    </location>
    <ligand>
        <name>substrate</name>
    </ligand>
</feature>
<feature type="binding site" evidence="1">
    <location>
        <position position="349"/>
    </location>
    <ligand>
        <name>Zn(2+)</name>
        <dbReference type="ChEBI" id="CHEBI:29105"/>
    </ligand>
</feature>
<feature type="binding site" evidence="1">
    <location>
        <position position="351"/>
    </location>
    <ligand>
        <name>Fe cation</name>
        <dbReference type="ChEBI" id="CHEBI:24875"/>
    </ligand>
</feature>
<feature type="glycosylation site" description="N-linked (GlcNAc...) asparagine" evidence="5">
    <location>
        <position position="103"/>
    </location>
</feature>
<feature type="glycosylation site" description="N-linked (GlcNAc...) asparagine" evidence="5">
    <location>
        <position position="365"/>
    </location>
</feature>
<feature type="glycosylation site" description="N-linked (GlcNAc...) asparagine" evidence="5">
    <location>
        <position position="422"/>
    </location>
</feature>
<feature type="sequence conflict" description="In Ref. 5; AA sequence." evidence="4" ref="5">
    <original>K</original>
    <variation>N</variation>
    <location>
        <position position="46"/>
    </location>
</feature>
<feature type="sequence conflict" description="In Ref. 1; AAW29950." evidence="4" ref="1">
    <original>R</original>
    <variation>G</variation>
    <location>
        <position position="301"/>
    </location>
</feature>
<feature type="sequence conflict" description="In Ref. 1; AAW29950." evidence="4" ref="1">
    <original>D</original>
    <variation>G</variation>
    <location>
        <position position="419"/>
    </location>
</feature>
<accession>Q949Y3</accession>
<accession>Q5MAU9</accession>
<proteinExistence type="evidence at protein level"/>
<reference key="1">
    <citation type="journal article" date="2005" name="Plant Mol. Biol.">
        <title>Expression patterns of purple acid phosphatase genes in Arabidopsis organs and functional analysis of AtPAP23 predominantly transcribed in flower.</title>
        <authorList>
            <person name="Zhu H."/>
            <person name="Qian W."/>
            <person name="Lu X."/>
            <person name="Li D."/>
            <person name="Liu X."/>
            <person name="Liu K."/>
            <person name="Wang D."/>
        </authorList>
    </citation>
    <scope>NUCLEOTIDE SEQUENCE [MRNA]</scope>
    <scope>TISSUE SPECIFICITY</scope>
    <source>
        <strain>cv. Columbia</strain>
    </source>
</reference>
<reference key="2">
    <citation type="journal article" date="2000" name="Nature">
        <title>Sequence and analysis of chromosome 5 of the plant Arabidopsis thaliana.</title>
        <authorList>
            <person name="Tabata S."/>
            <person name="Kaneko T."/>
            <person name="Nakamura Y."/>
            <person name="Kotani H."/>
            <person name="Kato T."/>
            <person name="Asamizu E."/>
            <person name="Miyajima N."/>
            <person name="Sasamoto S."/>
            <person name="Kimura T."/>
            <person name="Hosouchi T."/>
            <person name="Kawashima K."/>
            <person name="Kohara M."/>
            <person name="Matsumoto M."/>
            <person name="Matsuno A."/>
            <person name="Muraki A."/>
            <person name="Nakayama S."/>
            <person name="Nakazaki N."/>
            <person name="Naruo K."/>
            <person name="Okumura S."/>
            <person name="Shinpo S."/>
            <person name="Takeuchi C."/>
            <person name="Wada T."/>
            <person name="Watanabe A."/>
            <person name="Yamada M."/>
            <person name="Yasuda M."/>
            <person name="Sato S."/>
            <person name="de la Bastide M."/>
            <person name="Huang E."/>
            <person name="Spiegel L."/>
            <person name="Gnoj L."/>
            <person name="O'Shaughnessy A."/>
            <person name="Preston R."/>
            <person name="Habermann K."/>
            <person name="Murray J."/>
            <person name="Johnson D."/>
            <person name="Rohlfing T."/>
            <person name="Nelson J."/>
            <person name="Stoneking T."/>
            <person name="Pepin K."/>
            <person name="Spieth J."/>
            <person name="Sekhon M."/>
            <person name="Armstrong J."/>
            <person name="Becker M."/>
            <person name="Belter E."/>
            <person name="Cordum H."/>
            <person name="Cordes M."/>
            <person name="Courtney L."/>
            <person name="Courtney W."/>
            <person name="Dante M."/>
            <person name="Du H."/>
            <person name="Edwards J."/>
            <person name="Fryman J."/>
            <person name="Haakensen B."/>
            <person name="Lamar E."/>
            <person name="Latreille P."/>
            <person name="Leonard S."/>
            <person name="Meyer R."/>
            <person name="Mulvaney E."/>
            <person name="Ozersky P."/>
            <person name="Riley A."/>
            <person name="Strowmatt C."/>
            <person name="Wagner-McPherson C."/>
            <person name="Wollam A."/>
            <person name="Yoakum M."/>
            <person name="Bell M."/>
            <person name="Dedhia N."/>
            <person name="Parnell L."/>
            <person name="Shah R."/>
            <person name="Rodriguez M."/>
            <person name="Hoon See L."/>
            <person name="Vil D."/>
            <person name="Baker J."/>
            <person name="Kirchoff K."/>
            <person name="Toth K."/>
            <person name="King L."/>
            <person name="Bahret A."/>
            <person name="Miller B."/>
            <person name="Marra M.A."/>
            <person name="Martienssen R."/>
            <person name="McCombie W.R."/>
            <person name="Wilson R.K."/>
            <person name="Murphy G."/>
            <person name="Bancroft I."/>
            <person name="Volckaert G."/>
            <person name="Wambutt R."/>
            <person name="Duesterhoeft A."/>
            <person name="Stiekema W."/>
            <person name="Pohl T."/>
            <person name="Entian K.-D."/>
            <person name="Terryn N."/>
            <person name="Hartley N."/>
            <person name="Bent E."/>
            <person name="Johnson S."/>
            <person name="Langham S.-A."/>
            <person name="McCullagh B."/>
            <person name="Robben J."/>
            <person name="Grymonprez B."/>
            <person name="Zimmermann W."/>
            <person name="Ramsperger U."/>
            <person name="Wedler H."/>
            <person name="Balke K."/>
            <person name="Wedler E."/>
            <person name="Peters S."/>
            <person name="van Staveren M."/>
            <person name="Dirkse W."/>
            <person name="Mooijman P."/>
            <person name="Klein Lankhorst R."/>
            <person name="Weitzenegger T."/>
            <person name="Bothe G."/>
            <person name="Rose M."/>
            <person name="Hauf J."/>
            <person name="Berneiser S."/>
            <person name="Hempel S."/>
            <person name="Feldpausch M."/>
            <person name="Lamberth S."/>
            <person name="Villarroel R."/>
            <person name="Gielen J."/>
            <person name="Ardiles W."/>
            <person name="Bents O."/>
            <person name="Lemcke K."/>
            <person name="Kolesov G."/>
            <person name="Mayer K.F.X."/>
            <person name="Rudd S."/>
            <person name="Schoof H."/>
            <person name="Schueller C."/>
            <person name="Zaccaria P."/>
            <person name="Mewes H.-W."/>
            <person name="Bevan M."/>
            <person name="Fransz P.F."/>
        </authorList>
    </citation>
    <scope>NUCLEOTIDE SEQUENCE [LARGE SCALE GENOMIC DNA]</scope>
    <source>
        <strain>cv. Columbia</strain>
    </source>
</reference>
<reference key="3">
    <citation type="journal article" date="2017" name="Plant J.">
        <title>Araport11: a complete reannotation of the Arabidopsis thaliana reference genome.</title>
        <authorList>
            <person name="Cheng C.Y."/>
            <person name="Krishnakumar V."/>
            <person name="Chan A.P."/>
            <person name="Thibaud-Nissen F."/>
            <person name="Schobel S."/>
            <person name="Town C.D."/>
        </authorList>
    </citation>
    <scope>GENOME REANNOTATION</scope>
    <source>
        <strain>cv. Columbia</strain>
    </source>
</reference>
<reference key="4">
    <citation type="journal article" date="2003" name="Science">
        <title>Empirical analysis of transcriptional activity in the Arabidopsis genome.</title>
        <authorList>
            <person name="Yamada K."/>
            <person name="Lim J."/>
            <person name="Dale J.M."/>
            <person name="Chen H."/>
            <person name="Shinn P."/>
            <person name="Palm C.J."/>
            <person name="Southwick A.M."/>
            <person name="Wu H.C."/>
            <person name="Kim C.J."/>
            <person name="Nguyen M."/>
            <person name="Pham P.K."/>
            <person name="Cheuk R.F."/>
            <person name="Karlin-Newmann G."/>
            <person name="Liu S.X."/>
            <person name="Lam B."/>
            <person name="Sakano H."/>
            <person name="Wu T."/>
            <person name="Yu G."/>
            <person name="Miranda M."/>
            <person name="Quach H.L."/>
            <person name="Tripp M."/>
            <person name="Chang C.H."/>
            <person name="Lee J.M."/>
            <person name="Toriumi M.J."/>
            <person name="Chan M.M."/>
            <person name="Tang C.C."/>
            <person name="Onodera C.S."/>
            <person name="Deng J.M."/>
            <person name="Akiyama K."/>
            <person name="Ansari Y."/>
            <person name="Arakawa T."/>
            <person name="Banh J."/>
            <person name="Banno F."/>
            <person name="Bowser L."/>
            <person name="Brooks S.Y."/>
            <person name="Carninci P."/>
            <person name="Chao Q."/>
            <person name="Choy N."/>
            <person name="Enju A."/>
            <person name="Goldsmith A.D."/>
            <person name="Gurjal M."/>
            <person name="Hansen N.F."/>
            <person name="Hayashizaki Y."/>
            <person name="Johnson-Hopson C."/>
            <person name="Hsuan V.W."/>
            <person name="Iida K."/>
            <person name="Karnes M."/>
            <person name="Khan S."/>
            <person name="Koesema E."/>
            <person name="Ishida J."/>
            <person name="Jiang P.X."/>
            <person name="Jones T."/>
            <person name="Kawai J."/>
            <person name="Kamiya A."/>
            <person name="Meyers C."/>
            <person name="Nakajima M."/>
            <person name="Narusaka M."/>
            <person name="Seki M."/>
            <person name="Sakurai T."/>
            <person name="Satou M."/>
            <person name="Tamse R."/>
            <person name="Vaysberg M."/>
            <person name="Wallender E.K."/>
            <person name="Wong C."/>
            <person name="Yamamura Y."/>
            <person name="Yuan S."/>
            <person name="Shinozaki K."/>
            <person name="Davis R.W."/>
            <person name="Theologis A."/>
            <person name="Ecker J.R."/>
        </authorList>
    </citation>
    <scope>NUCLEOTIDE SEQUENCE [LARGE SCALE MRNA]</scope>
    <source>
        <strain>cv. Columbia</strain>
    </source>
</reference>
<reference key="5">
    <citation type="journal article" date="2006" name="Plant Physiol.">
        <title>Biochemical and molecular characterization of AtPAP26, a vacuolar purple acid phosphatase up-regulated in phosphate-deprived Arabidopsis suspension cells and seedlings.</title>
        <authorList>
            <person name="Veljanovski V."/>
            <person name="Vanderbeld B."/>
            <person name="Knowles V.L."/>
            <person name="Snedden W.A."/>
            <person name="Plaxton W.C."/>
        </authorList>
    </citation>
    <scope>PROTEIN SEQUENCE OF 31-53</scope>
    <scope>FUNCTION</scope>
    <scope>GLYCOSYLATION</scope>
    <scope>CHARACTERIZATION</scope>
    <scope>BIOPHYSICOCHEMICAL PROPERTIES</scope>
    <scope>INDUCTION</scope>
    <scope>SUBCELLULAR LOCATION</scope>
</reference>
<reference key="6">
    <citation type="journal article" date="2002" name="J. Biol. Chem.">
        <title>Purple acid phosphatases of Arabidopsis thaliana. Comparative analysis and differential regulation by phosphate deprivation.</title>
        <authorList>
            <person name="Li D."/>
            <person name="Zhu H."/>
            <person name="Liu K."/>
            <person name="Liu X."/>
            <person name="Leggewie G."/>
            <person name="Udvardi M."/>
            <person name="Wang D."/>
        </authorList>
    </citation>
    <scope>GENE FAMILY</scope>
    <scope>NOMENCLATURE</scope>
</reference>
<evidence type="ECO:0000250" key="1"/>
<evidence type="ECO:0000269" key="2">
    <source>
    </source>
</evidence>
<evidence type="ECO:0000269" key="3">
    <source>
    </source>
</evidence>
<evidence type="ECO:0000305" key="4"/>
<evidence type="ECO:0000305" key="5">
    <source>
    </source>
</evidence>
<keyword id="KW-0903">Direct protein sequencing</keyword>
<keyword id="KW-0325">Glycoprotein</keyword>
<keyword id="KW-0376">Hydrogen peroxide</keyword>
<keyword id="KW-0378">Hydrolase</keyword>
<keyword id="KW-0408">Iron</keyword>
<keyword id="KW-0479">Metal-binding</keyword>
<keyword id="KW-0560">Oxidoreductase</keyword>
<keyword id="KW-0575">Peroxidase</keyword>
<keyword id="KW-1185">Reference proteome</keyword>
<keyword id="KW-0732">Signal</keyword>
<keyword id="KW-0926">Vacuole</keyword>
<keyword id="KW-0862">Zinc</keyword>
<protein>
    <recommendedName>
        <fullName>Bifunctional purple acid phosphatase 26</fullName>
    </recommendedName>
    <domain>
        <recommendedName>
            <fullName>Acid phosphatase</fullName>
            <ecNumber>3.1.3.2</ecNumber>
        </recommendedName>
    </domain>
    <domain>
        <recommendedName>
            <fullName>Peroxidase</fullName>
            <ecNumber>1.11.1.7</ecNumber>
        </recommendedName>
    </domain>
</protein>
<gene>
    <name type="primary">PAP26</name>
    <name type="ordered locus">At5g34850</name>
    <name type="ORF">T5E15.10</name>
</gene>
<name>PPA26_ARATH</name>